<keyword id="KW-0413">Isomerase</keyword>
<keyword id="KW-0663">Pyridoxal phosphate</keyword>
<feature type="chain" id="PRO_0000114496" description="Alanine racemase">
    <location>
        <begin position="1"/>
        <end position="341"/>
    </location>
</feature>
<feature type="active site" description="Proton acceptor; specific for D-alanine" evidence="1">
    <location>
        <position position="33"/>
    </location>
</feature>
<feature type="active site" description="Proton acceptor; specific for L-alanine" evidence="1">
    <location>
        <position position="236"/>
    </location>
</feature>
<feature type="binding site" evidence="1">
    <location>
        <position position="126"/>
    </location>
    <ligand>
        <name>substrate</name>
    </ligand>
</feature>
<feature type="binding site" evidence="1">
    <location>
        <position position="284"/>
    </location>
    <ligand>
        <name>substrate</name>
    </ligand>
</feature>
<feature type="modified residue" description="N6-(pyridoxal phosphate)lysine" evidence="1">
    <location>
        <position position="33"/>
    </location>
</feature>
<evidence type="ECO:0000255" key="1">
    <source>
        <dbReference type="HAMAP-Rule" id="MF_01201"/>
    </source>
</evidence>
<evidence type="ECO:0000269" key="2">
    <source ref="1"/>
</evidence>
<dbReference type="EC" id="5.1.1.1" evidence="1"/>
<dbReference type="EMBL" id="AF212103">
    <property type="protein sequence ID" value="AAF23014.1"/>
    <property type="molecule type" value="Genomic_DNA"/>
</dbReference>
<dbReference type="SMR" id="Q9RER4"/>
<dbReference type="UniPathway" id="UPA00042">
    <property type="reaction ID" value="UER00497"/>
</dbReference>
<dbReference type="GO" id="GO:0005829">
    <property type="term" value="C:cytosol"/>
    <property type="evidence" value="ECO:0007669"/>
    <property type="project" value="TreeGrafter"/>
</dbReference>
<dbReference type="GO" id="GO:0008784">
    <property type="term" value="F:alanine racemase activity"/>
    <property type="evidence" value="ECO:0007669"/>
    <property type="project" value="UniProtKB-UniRule"/>
</dbReference>
<dbReference type="GO" id="GO:0030170">
    <property type="term" value="F:pyridoxal phosphate binding"/>
    <property type="evidence" value="ECO:0007669"/>
    <property type="project" value="UniProtKB-UniRule"/>
</dbReference>
<dbReference type="GO" id="GO:0030632">
    <property type="term" value="P:D-alanine biosynthetic process"/>
    <property type="evidence" value="ECO:0007669"/>
    <property type="project" value="UniProtKB-UniRule"/>
</dbReference>
<dbReference type="CDD" id="cd00430">
    <property type="entry name" value="PLPDE_III_AR"/>
    <property type="match status" value="1"/>
</dbReference>
<dbReference type="FunFam" id="3.20.20.10:FF:000002">
    <property type="entry name" value="Alanine racemase"/>
    <property type="match status" value="1"/>
</dbReference>
<dbReference type="Gene3D" id="3.20.20.10">
    <property type="entry name" value="Alanine racemase"/>
    <property type="match status" value="1"/>
</dbReference>
<dbReference type="Gene3D" id="2.40.37.10">
    <property type="entry name" value="Lyase, Ornithine Decarboxylase, Chain A, domain 1"/>
    <property type="match status" value="1"/>
</dbReference>
<dbReference type="HAMAP" id="MF_01201">
    <property type="entry name" value="Ala_racemase"/>
    <property type="match status" value="1"/>
</dbReference>
<dbReference type="InterPro" id="IPR000821">
    <property type="entry name" value="Ala_racemase"/>
</dbReference>
<dbReference type="InterPro" id="IPR009006">
    <property type="entry name" value="Ala_racemase/Decarboxylase_C"/>
</dbReference>
<dbReference type="InterPro" id="IPR011079">
    <property type="entry name" value="Ala_racemase_C"/>
</dbReference>
<dbReference type="InterPro" id="IPR001608">
    <property type="entry name" value="Ala_racemase_N"/>
</dbReference>
<dbReference type="InterPro" id="IPR020622">
    <property type="entry name" value="Ala_racemase_pyridoxalP-BS"/>
</dbReference>
<dbReference type="InterPro" id="IPR029066">
    <property type="entry name" value="PLP-binding_barrel"/>
</dbReference>
<dbReference type="NCBIfam" id="TIGR00492">
    <property type="entry name" value="alr"/>
    <property type="match status" value="1"/>
</dbReference>
<dbReference type="PANTHER" id="PTHR30511">
    <property type="entry name" value="ALANINE RACEMASE"/>
    <property type="match status" value="1"/>
</dbReference>
<dbReference type="PANTHER" id="PTHR30511:SF0">
    <property type="entry name" value="ALANINE RACEMASE, CATABOLIC-RELATED"/>
    <property type="match status" value="1"/>
</dbReference>
<dbReference type="Pfam" id="PF00842">
    <property type="entry name" value="Ala_racemase_C"/>
    <property type="match status" value="1"/>
</dbReference>
<dbReference type="Pfam" id="PF01168">
    <property type="entry name" value="Ala_racemase_N"/>
    <property type="match status" value="1"/>
</dbReference>
<dbReference type="PRINTS" id="PR00992">
    <property type="entry name" value="ALARACEMASE"/>
</dbReference>
<dbReference type="SMART" id="SM01005">
    <property type="entry name" value="Ala_racemase_C"/>
    <property type="match status" value="1"/>
</dbReference>
<dbReference type="SUPFAM" id="SSF50621">
    <property type="entry name" value="Alanine racemase C-terminal domain-like"/>
    <property type="match status" value="1"/>
</dbReference>
<dbReference type="SUPFAM" id="SSF51419">
    <property type="entry name" value="PLP-binding barrel"/>
    <property type="match status" value="1"/>
</dbReference>
<dbReference type="PROSITE" id="PS00395">
    <property type="entry name" value="ALANINE_RACEMASE"/>
    <property type="match status" value="1"/>
</dbReference>
<sequence>MRRAVLEILEERIIHNVKEIHRFSGKRIIAVVKANAYGIGVREVSRILEGLEEVDAFAVACTQEGVELRECGIKKKILILGGILEEDVKLLEEYDLTPVISDPEHLKVLKDRNIKFHVKYDTGMGRLGFTNEIIKDPRVEGVMSHFSSPADRNFSKLQIKRFEEILKNYEKVKYIHLESSAGLIYRVPFTTHVRVGLAIYGEKPLKDYPLEVKPALRLRARLISVKELPENYPVSYGRTYITKRKTKLGVVAFGYADGLMKTLSNRSFLIFEGRKVPIIGNITMDMTMVDLSGTEARTGDWVYIVNEERSFTPLARDAGTIPYEIMCNLSRRVERLVIKKR</sequence>
<gene>
    <name type="primary">alr</name>
</gene>
<comment type="function">
    <text evidence="2">Catalyzes the interconversion of L-alanine and D-alanine.</text>
</comment>
<comment type="catalytic activity">
    <reaction evidence="1 2">
        <text>L-alanine = D-alanine</text>
        <dbReference type="Rhea" id="RHEA:20249"/>
        <dbReference type="ChEBI" id="CHEBI:57416"/>
        <dbReference type="ChEBI" id="CHEBI:57972"/>
        <dbReference type="EC" id="5.1.1.1"/>
    </reaction>
</comment>
<comment type="cofactor">
    <cofactor evidence="1 2">
        <name>pyridoxal 5'-phosphate</name>
        <dbReference type="ChEBI" id="CHEBI:597326"/>
    </cofactor>
</comment>
<comment type="pathway">
    <text evidence="1 2">Amino-acid biosynthesis; D-alanine biosynthesis; D-alanine from L-alanine: step 1/1.</text>
</comment>
<comment type="miscellaneous">
    <text>Strong thermostability.</text>
</comment>
<comment type="similarity">
    <text evidence="1">Belongs to the alanine racemase family.</text>
</comment>
<proteinExistence type="evidence at protein level"/>
<accession>Q9RER4</accession>
<organism>
    <name type="scientific">Aquifex pyrophilus</name>
    <dbReference type="NCBI Taxonomy" id="2714"/>
    <lineage>
        <taxon>Bacteria</taxon>
        <taxon>Pseudomonadati</taxon>
        <taxon>Aquificota</taxon>
        <taxon>Aquificia</taxon>
        <taxon>Aquificales</taxon>
        <taxon>Aquificaceae</taxon>
        <taxon>Aquifex</taxon>
    </lineage>
</organism>
<name>ALR_AQUPY</name>
<reference key="1">
    <citation type="journal article" date="2000" name="J. Biochem. Mol. Biol.">
        <title>Molecular cloning of an extremely thermostable alanine racemase from Aquifex pyrophilus and enzymatic characterization of the expressed protein.</title>
        <authorList>
            <person name="Kim S.S."/>
            <person name="Yu Y.G."/>
        </authorList>
    </citation>
    <scope>NUCLEOTIDE SEQUENCE [GENOMIC DNA]</scope>
    <scope>FUNCTION</scope>
    <scope>CATALYTIC ACTIVITY</scope>
    <scope>COFACTOR</scope>
    <scope>PATHWAY</scope>
</reference>
<protein>
    <recommendedName>
        <fullName evidence="1">Alanine racemase</fullName>
        <ecNumber evidence="1">5.1.1.1</ecNumber>
    </recommendedName>
</protein>